<keyword id="KW-0143">Chaperone</keyword>
<keyword id="KW-0963">Cytoplasm</keyword>
<keyword id="KW-0996">Nickel insertion</keyword>
<keyword id="KW-1185">Reference proteome</keyword>
<reference key="1">
    <citation type="journal article" date="2005" name="Genome Res.">
        <title>Coping with cold: the genome of the versatile marine Antarctica bacterium Pseudoalteromonas haloplanktis TAC125.</title>
        <authorList>
            <person name="Medigue C."/>
            <person name="Krin E."/>
            <person name="Pascal G."/>
            <person name="Barbe V."/>
            <person name="Bernsel A."/>
            <person name="Bertin P.N."/>
            <person name="Cheung F."/>
            <person name="Cruveiller S."/>
            <person name="D'Amico S."/>
            <person name="Duilio A."/>
            <person name="Fang G."/>
            <person name="Feller G."/>
            <person name="Ho C."/>
            <person name="Mangenot S."/>
            <person name="Marino G."/>
            <person name="Nilsson J."/>
            <person name="Parrilli E."/>
            <person name="Rocha E.P.C."/>
            <person name="Rouy Z."/>
            <person name="Sekowska A."/>
            <person name="Tutino M.L."/>
            <person name="Vallenet D."/>
            <person name="von Heijne G."/>
            <person name="Danchin A."/>
        </authorList>
    </citation>
    <scope>NUCLEOTIDE SEQUENCE [LARGE SCALE GENOMIC DNA]</scope>
    <source>
        <strain>TAC 125</strain>
    </source>
</reference>
<feature type="chain" id="PRO_0000340482" description="Urease accessory protein UreD">
    <location>
        <begin position="1"/>
        <end position="302"/>
    </location>
</feature>
<organism>
    <name type="scientific">Pseudoalteromonas translucida (strain TAC 125)</name>
    <dbReference type="NCBI Taxonomy" id="326442"/>
    <lineage>
        <taxon>Bacteria</taxon>
        <taxon>Pseudomonadati</taxon>
        <taxon>Pseudomonadota</taxon>
        <taxon>Gammaproteobacteria</taxon>
        <taxon>Alteromonadales</taxon>
        <taxon>Pseudoalteromonadaceae</taxon>
        <taxon>Pseudoalteromonas</taxon>
    </lineage>
</organism>
<proteinExistence type="inferred from homology"/>
<dbReference type="EMBL" id="CR954246">
    <property type="protein sequence ID" value="CAI86828.1"/>
    <property type="molecule type" value="Genomic_DNA"/>
</dbReference>
<dbReference type="SMR" id="Q3IH71"/>
<dbReference type="STRING" id="326442.PSHAa1756"/>
<dbReference type="KEGG" id="pha:PSHAa1756"/>
<dbReference type="eggNOG" id="COG0829">
    <property type="taxonomic scope" value="Bacteria"/>
</dbReference>
<dbReference type="HOGENOM" id="CLU_056339_0_0_6"/>
<dbReference type="BioCyc" id="PHAL326442:PSHA_RS08620-MONOMER"/>
<dbReference type="Proteomes" id="UP000006843">
    <property type="component" value="Chromosome I"/>
</dbReference>
<dbReference type="GO" id="GO:0005737">
    <property type="term" value="C:cytoplasm"/>
    <property type="evidence" value="ECO:0007669"/>
    <property type="project" value="UniProtKB-SubCell"/>
</dbReference>
<dbReference type="GO" id="GO:0016151">
    <property type="term" value="F:nickel cation binding"/>
    <property type="evidence" value="ECO:0007669"/>
    <property type="project" value="UniProtKB-UniRule"/>
</dbReference>
<dbReference type="HAMAP" id="MF_01384">
    <property type="entry name" value="UreD"/>
    <property type="match status" value="1"/>
</dbReference>
<dbReference type="InterPro" id="IPR002669">
    <property type="entry name" value="UreD"/>
</dbReference>
<dbReference type="PANTHER" id="PTHR33643">
    <property type="entry name" value="UREASE ACCESSORY PROTEIN D"/>
    <property type="match status" value="1"/>
</dbReference>
<dbReference type="PANTHER" id="PTHR33643:SF1">
    <property type="entry name" value="UREASE ACCESSORY PROTEIN D"/>
    <property type="match status" value="1"/>
</dbReference>
<dbReference type="Pfam" id="PF01774">
    <property type="entry name" value="UreD"/>
    <property type="match status" value="1"/>
</dbReference>
<protein>
    <recommendedName>
        <fullName evidence="1">Urease accessory protein UreD</fullName>
    </recommendedName>
</protein>
<evidence type="ECO:0000255" key="1">
    <source>
        <dbReference type="HAMAP-Rule" id="MF_01384"/>
    </source>
</evidence>
<name>URED_PSET1</name>
<sequence>MMTLSSMPVTHRADAKSGHSFDANRHWAASLTLGFCAQNSGDTRVTRMNIARHYGPLRVQRPFYPEGKDGCCHVYLLHPPGGVVSGDALNIDISLTKGAHSLITTPAANKLYKADSNGVAWSQTTNLKVDDNATLEWLPQETLAFDGSRGVQVFNIELAKTAKCLGWEILGLGRPASDLPFATGCIEQRFKLTQDGKPLWLERQNLDPTHPRFNGKWGQGGATVHGTFWTVGLSDPTAAIAALREQLPPSNNWAATYRRDVLLVRYLGHERNQVWKLFEQVRNILRPLLSGHQATIPRIWLT</sequence>
<gene>
    <name evidence="1" type="primary">ureD</name>
    <name type="ordered locus">PSHAa1756</name>
</gene>
<accession>Q3IH71</accession>
<comment type="function">
    <text evidence="1">Required for maturation of urease via the functional incorporation of the urease nickel metallocenter.</text>
</comment>
<comment type="subunit">
    <text evidence="1">UreD, UreF and UreG form a complex that acts as a GTP-hydrolysis-dependent molecular chaperone, activating the urease apoprotein by helping to assemble the nickel containing metallocenter of UreC. The UreE protein probably delivers the nickel.</text>
</comment>
<comment type="subcellular location">
    <subcellularLocation>
        <location evidence="1">Cytoplasm</location>
    </subcellularLocation>
</comment>
<comment type="similarity">
    <text evidence="1">Belongs to the UreD family.</text>
</comment>